<protein>
    <recommendedName>
        <fullName evidence="2">Adenylosuccinate synthetase</fullName>
        <shortName evidence="2">AMPSase</shortName>
        <shortName evidence="2">AdSS</shortName>
        <ecNumber evidence="2">6.3.4.4</ecNumber>
    </recommendedName>
    <alternativeName>
        <fullName evidence="2">IMP--aspartate ligase</fullName>
    </alternativeName>
</protein>
<gene>
    <name type="ORF">GL24277</name>
</gene>
<keyword id="KW-0963">Cytoplasm</keyword>
<keyword id="KW-0342">GTP-binding</keyword>
<keyword id="KW-0436">Ligase</keyword>
<keyword id="KW-0460">Magnesium</keyword>
<keyword id="KW-0479">Metal-binding</keyword>
<keyword id="KW-0547">Nucleotide-binding</keyword>
<keyword id="KW-0658">Purine biosynthesis</keyword>
<keyword id="KW-1185">Reference proteome</keyword>
<evidence type="ECO:0000250" key="1"/>
<evidence type="ECO:0000255" key="2">
    <source>
        <dbReference type="HAMAP-Rule" id="MF_03125"/>
    </source>
</evidence>
<accession>B4G518</accession>
<feature type="chain" id="PRO_0000399262" description="Adenylosuccinate synthetase">
    <location>
        <begin position="1"/>
        <end position="448"/>
    </location>
</feature>
<feature type="active site" description="Proton acceptor" evidence="2">
    <location>
        <position position="37"/>
    </location>
</feature>
<feature type="active site" description="Proton donor" evidence="2">
    <location>
        <position position="65"/>
    </location>
</feature>
<feature type="binding site" evidence="2">
    <location>
        <begin position="36"/>
        <end position="42"/>
    </location>
    <ligand>
        <name>GTP</name>
        <dbReference type="ChEBI" id="CHEBI:37565"/>
    </ligand>
</feature>
<feature type="binding site" description="in other chain" evidence="2">
    <location>
        <begin position="37"/>
        <end position="40"/>
    </location>
    <ligand>
        <name>IMP</name>
        <dbReference type="ChEBI" id="CHEBI:58053"/>
        <note>ligand shared between dimeric partners</note>
    </ligand>
</feature>
<feature type="binding site" evidence="2">
    <location>
        <position position="37"/>
    </location>
    <ligand>
        <name>Mg(2+)</name>
        <dbReference type="ChEBI" id="CHEBI:18420"/>
    </ligand>
</feature>
<feature type="binding site" description="in other chain" evidence="2">
    <location>
        <begin position="62"/>
        <end position="65"/>
    </location>
    <ligand>
        <name>IMP</name>
        <dbReference type="ChEBI" id="CHEBI:58053"/>
        <note>ligand shared between dimeric partners</note>
    </ligand>
</feature>
<feature type="binding site" evidence="2">
    <location>
        <begin position="64"/>
        <end position="66"/>
    </location>
    <ligand>
        <name>GTP</name>
        <dbReference type="ChEBI" id="CHEBI:37565"/>
    </ligand>
</feature>
<feature type="binding site" evidence="2">
    <location>
        <position position="64"/>
    </location>
    <ligand>
        <name>Mg(2+)</name>
        <dbReference type="ChEBI" id="CHEBI:18420"/>
    </ligand>
</feature>
<feature type="binding site" description="in other chain" evidence="2">
    <location>
        <position position="154"/>
    </location>
    <ligand>
        <name>IMP</name>
        <dbReference type="ChEBI" id="CHEBI:58053"/>
        <note>ligand shared between dimeric partners</note>
    </ligand>
</feature>
<feature type="binding site" evidence="2">
    <location>
        <position position="168"/>
    </location>
    <ligand>
        <name>IMP</name>
        <dbReference type="ChEBI" id="CHEBI:58053"/>
        <note>ligand shared between dimeric partners</note>
    </ligand>
</feature>
<feature type="binding site" description="in other chain" evidence="2">
    <location>
        <position position="246"/>
    </location>
    <ligand>
        <name>IMP</name>
        <dbReference type="ChEBI" id="CHEBI:58053"/>
        <note>ligand shared between dimeric partners</note>
    </ligand>
</feature>
<feature type="binding site" description="in other chain" evidence="2">
    <location>
        <position position="261"/>
    </location>
    <ligand>
        <name>IMP</name>
        <dbReference type="ChEBI" id="CHEBI:58053"/>
        <note>ligand shared between dimeric partners</note>
    </ligand>
</feature>
<feature type="binding site" evidence="2">
    <location>
        <begin position="321"/>
        <end position="327"/>
    </location>
    <ligand>
        <name>substrate</name>
    </ligand>
</feature>
<feature type="binding site" description="in other chain" evidence="2">
    <location>
        <position position="325"/>
    </location>
    <ligand>
        <name>IMP</name>
        <dbReference type="ChEBI" id="CHEBI:58053"/>
        <note>ligand shared between dimeric partners</note>
    </ligand>
</feature>
<feature type="binding site" evidence="2">
    <location>
        <position position="327"/>
    </location>
    <ligand>
        <name>GTP</name>
        <dbReference type="ChEBI" id="CHEBI:37565"/>
    </ligand>
</feature>
<feature type="binding site" evidence="2">
    <location>
        <begin position="353"/>
        <end position="355"/>
    </location>
    <ligand>
        <name>GTP</name>
        <dbReference type="ChEBI" id="CHEBI:37565"/>
    </ligand>
</feature>
<feature type="binding site" evidence="2">
    <location>
        <begin position="436"/>
        <end position="438"/>
    </location>
    <ligand>
        <name>GTP</name>
        <dbReference type="ChEBI" id="CHEBI:37565"/>
    </ligand>
</feature>
<name>PURA_DROPE</name>
<organism>
    <name type="scientific">Drosophila persimilis</name>
    <name type="common">Fruit fly</name>
    <dbReference type="NCBI Taxonomy" id="7234"/>
    <lineage>
        <taxon>Eukaryota</taxon>
        <taxon>Metazoa</taxon>
        <taxon>Ecdysozoa</taxon>
        <taxon>Arthropoda</taxon>
        <taxon>Hexapoda</taxon>
        <taxon>Insecta</taxon>
        <taxon>Pterygota</taxon>
        <taxon>Neoptera</taxon>
        <taxon>Endopterygota</taxon>
        <taxon>Diptera</taxon>
        <taxon>Brachycera</taxon>
        <taxon>Muscomorpha</taxon>
        <taxon>Ephydroidea</taxon>
        <taxon>Drosophilidae</taxon>
        <taxon>Drosophila</taxon>
        <taxon>Sophophora</taxon>
    </lineage>
</organism>
<comment type="function">
    <text evidence="1">Plays an important role in the de novo pathway and in the salvage pathway of purine nucleotide biosynthesis. Catalyzes the first committed step in the biosynthesis of AMP from IMP (By similarity).</text>
</comment>
<comment type="catalytic activity">
    <reaction evidence="2">
        <text>IMP + L-aspartate + GTP = N(6)-(1,2-dicarboxyethyl)-AMP + GDP + phosphate + 2 H(+)</text>
        <dbReference type="Rhea" id="RHEA:15753"/>
        <dbReference type="ChEBI" id="CHEBI:15378"/>
        <dbReference type="ChEBI" id="CHEBI:29991"/>
        <dbReference type="ChEBI" id="CHEBI:37565"/>
        <dbReference type="ChEBI" id="CHEBI:43474"/>
        <dbReference type="ChEBI" id="CHEBI:57567"/>
        <dbReference type="ChEBI" id="CHEBI:58053"/>
        <dbReference type="ChEBI" id="CHEBI:58189"/>
        <dbReference type="EC" id="6.3.4.4"/>
    </reaction>
</comment>
<comment type="cofactor">
    <cofactor evidence="2">
        <name>Mg(2+)</name>
        <dbReference type="ChEBI" id="CHEBI:18420"/>
    </cofactor>
    <text evidence="2">Binds 1 Mg(2+) ion per subunit.</text>
</comment>
<comment type="pathway">
    <text evidence="2">Purine metabolism; AMP biosynthesis via de novo pathway; AMP from IMP: step 1/2.</text>
</comment>
<comment type="subunit">
    <text evidence="2">Homodimer.</text>
</comment>
<comment type="subcellular location">
    <subcellularLocation>
        <location evidence="2">Cytoplasm</location>
    </subcellularLocation>
</comment>
<comment type="similarity">
    <text evidence="2">Belongs to the adenylosuccinate synthetase family.</text>
</comment>
<dbReference type="EC" id="6.3.4.4" evidence="2"/>
<dbReference type="EMBL" id="CH479179">
    <property type="protein sequence ID" value="EDW24684.1"/>
    <property type="molecule type" value="Genomic_DNA"/>
</dbReference>
<dbReference type="SMR" id="B4G518"/>
<dbReference type="STRING" id="7234.B4G518"/>
<dbReference type="EnsemblMetazoa" id="FBtr0189892">
    <property type="protein sequence ID" value="FBpp0188384"/>
    <property type="gene ID" value="FBgn0161867"/>
</dbReference>
<dbReference type="EnsemblMetazoa" id="XM_002013662.2">
    <property type="protein sequence ID" value="XP_002013698.1"/>
    <property type="gene ID" value="LOC6587693"/>
</dbReference>
<dbReference type="GeneID" id="6587693"/>
<dbReference type="KEGG" id="dpe:6587693"/>
<dbReference type="eggNOG" id="KOG1355">
    <property type="taxonomic scope" value="Eukaryota"/>
</dbReference>
<dbReference type="HOGENOM" id="CLU_029848_3_0_1"/>
<dbReference type="OMA" id="QSYVRFL"/>
<dbReference type="OrthoDB" id="10265645at2759"/>
<dbReference type="PhylomeDB" id="B4G518"/>
<dbReference type="UniPathway" id="UPA00075">
    <property type="reaction ID" value="UER00335"/>
</dbReference>
<dbReference type="Proteomes" id="UP000008744">
    <property type="component" value="Unassembled WGS sequence"/>
</dbReference>
<dbReference type="GO" id="GO:0005737">
    <property type="term" value="C:cytoplasm"/>
    <property type="evidence" value="ECO:0007669"/>
    <property type="project" value="UniProtKB-SubCell"/>
</dbReference>
<dbReference type="GO" id="GO:0004019">
    <property type="term" value="F:adenylosuccinate synthase activity"/>
    <property type="evidence" value="ECO:0007669"/>
    <property type="project" value="UniProtKB-UniRule"/>
</dbReference>
<dbReference type="GO" id="GO:0005525">
    <property type="term" value="F:GTP binding"/>
    <property type="evidence" value="ECO:0007669"/>
    <property type="project" value="UniProtKB-UniRule"/>
</dbReference>
<dbReference type="GO" id="GO:0000287">
    <property type="term" value="F:magnesium ion binding"/>
    <property type="evidence" value="ECO:0007669"/>
    <property type="project" value="UniProtKB-UniRule"/>
</dbReference>
<dbReference type="GO" id="GO:0044208">
    <property type="term" value="P:'de novo' AMP biosynthetic process"/>
    <property type="evidence" value="ECO:0007669"/>
    <property type="project" value="UniProtKB-UniRule"/>
</dbReference>
<dbReference type="GO" id="GO:0046040">
    <property type="term" value="P:IMP metabolic process"/>
    <property type="evidence" value="ECO:0007669"/>
    <property type="project" value="TreeGrafter"/>
</dbReference>
<dbReference type="CDD" id="cd03108">
    <property type="entry name" value="AdSS"/>
    <property type="match status" value="1"/>
</dbReference>
<dbReference type="FunFam" id="3.90.170.10:FF:000001">
    <property type="entry name" value="Adenylosuccinate synthetase"/>
    <property type="match status" value="1"/>
</dbReference>
<dbReference type="FunFam" id="1.10.300.10:FF:000002">
    <property type="entry name" value="Adenylosuccinate synthetase, chloroplastic"/>
    <property type="match status" value="1"/>
</dbReference>
<dbReference type="Gene3D" id="3.40.440.10">
    <property type="entry name" value="Adenylosuccinate Synthetase, subunit A, domain 1"/>
    <property type="match status" value="1"/>
</dbReference>
<dbReference type="Gene3D" id="1.10.300.10">
    <property type="entry name" value="Adenylosuccinate Synthetase, subunit A, domain 2"/>
    <property type="match status" value="1"/>
</dbReference>
<dbReference type="Gene3D" id="3.90.170.10">
    <property type="entry name" value="Adenylosuccinate Synthetase, subunit A, domain 3"/>
    <property type="match status" value="1"/>
</dbReference>
<dbReference type="HAMAP" id="MF_00011">
    <property type="entry name" value="Adenylosucc_synth"/>
    <property type="match status" value="1"/>
</dbReference>
<dbReference type="InterPro" id="IPR018220">
    <property type="entry name" value="Adenylosuccin_syn_GTP-bd"/>
</dbReference>
<dbReference type="InterPro" id="IPR033128">
    <property type="entry name" value="Adenylosuccin_syn_Lys_AS"/>
</dbReference>
<dbReference type="InterPro" id="IPR042109">
    <property type="entry name" value="Adenylosuccinate_synth_dom1"/>
</dbReference>
<dbReference type="InterPro" id="IPR042110">
    <property type="entry name" value="Adenylosuccinate_synth_dom2"/>
</dbReference>
<dbReference type="InterPro" id="IPR042111">
    <property type="entry name" value="Adenylosuccinate_synth_dom3"/>
</dbReference>
<dbReference type="InterPro" id="IPR001114">
    <property type="entry name" value="Adenylosuccinate_synthetase"/>
</dbReference>
<dbReference type="InterPro" id="IPR027417">
    <property type="entry name" value="P-loop_NTPase"/>
</dbReference>
<dbReference type="NCBIfam" id="NF002223">
    <property type="entry name" value="PRK01117.1"/>
    <property type="match status" value="1"/>
</dbReference>
<dbReference type="NCBIfam" id="TIGR00184">
    <property type="entry name" value="purA"/>
    <property type="match status" value="1"/>
</dbReference>
<dbReference type="PANTHER" id="PTHR11846">
    <property type="entry name" value="ADENYLOSUCCINATE SYNTHETASE"/>
    <property type="match status" value="1"/>
</dbReference>
<dbReference type="PANTHER" id="PTHR11846:SF0">
    <property type="entry name" value="ADENYLOSUCCINATE SYNTHETASE"/>
    <property type="match status" value="1"/>
</dbReference>
<dbReference type="Pfam" id="PF00709">
    <property type="entry name" value="Adenylsucc_synt"/>
    <property type="match status" value="1"/>
</dbReference>
<dbReference type="SMART" id="SM00788">
    <property type="entry name" value="Adenylsucc_synt"/>
    <property type="match status" value="1"/>
</dbReference>
<dbReference type="SUPFAM" id="SSF52540">
    <property type="entry name" value="P-loop containing nucleoside triphosphate hydrolases"/>
    <property type="match status" value="1"/>
</dbReference>
<dbReference type="PROSITE" id="PS01266">
    <property type="entry name" value="ADENYLOSUCCIN_SYN_1"/>
    <property type="match status" value="1"/>
</dbReference>
<dbReference type="PROSITE" id="PS00513">
    <property type="entry name" value="ADENYLOSUCCIN_SYN_2"/>
    <property type="match status" value="1"/>
</dbReference>
<reference key="1">
    <citation type="journal article" date="2007" name="Nature">
        <title>Evolution of genes and genomes on the Drosophila phylogeny.</title>
        <authorList>
            <consortium name="Drosophila 12 genomes consortium"/>
        </authorList>
    </citation>
    <scope>NUCLEOTIDE SEQUENCE [LARGE SCALE GENOMIC DNA]</scope>
    <source>
        <strain>MSH-3 / Tucson 14011-0111.49</strain>
    </source>
</reference>
<proteinExistence type="inferred from homology"/>
<sequence length="448" mass="49304">MSTTNAINGNLYEQLHQGRTNMYKSKVDVVLGAQWGDEGKGKVVDMLASEVDIVCRCQGGNNAGHTVVANGTEFDFHLLPSGVVNEKCISVIGNGVVIHLPSLFDEVLKNEAKGLQHLEHRLIISDRAHLVFDFHQHVDGMQEAEKGGKSLGTTKKGIGPAYSSKATRNGIRVGELLGDFNAFSDKFKLIVATHLRLFPSINVDVEAELTRYRDYAEKVRPYVKDTICFLHTALRNGKTILVEGANAAMLDIDFGTYPYVTSSNCSIGGVLTGLGLPPQTIGEVIGVVKAYTTRVGDGPFPSEQLNEIGDLLQTRGFEVGVTTKRKRRCGWLDIPLLRYTSLVNGYTCICLTKLDILDTLPEIKVAVSYKKANGDKLDHFPGTIAELGNIEVEYAVLPGWQTSTEHIRNFKELPENAQHYVRFLEKELSVPVRWVGVGKGRESIINVH</sequence>